<evidence type="ECO:0000255" key="1">
    <source>
        <dbReference type="PROSITE-ProRule" id="PRU00116"/>
    </source>
</evidence>
<evidence type="ECO:0000256" key="2">
    <source>
        <dbReference type="SAM" id="MobiDB-lite"/>
    </source>
</evidence>
<feature type="chain" id="PRO_0000119143" description="Alpha-scruin">
    <location>
        <begin position="1"/>
        <end position="918"/>
    </location>
</feature>
<feature type="repeat" description="Kelch 1">
    <location>
        <begin position="82"/>
        <end position="133"/>
    </location>
</feature>
<feature type="repeat" description="Kelch 2">
    <location>
        <begin position="134"/>
        <end position="187"/>
    </location>
</feature>
<feature type="repeat" description="Kelch 3">
    <location>
        <begin position="188"/>
        <end position="235"/>
    </location>
</feature>
<feature type="repeat" description="Kelch 4">
    <location>
        <begin position="237"/>
        <end position="289"/>
    </location>
</feature>
<feature type="repeat" description="Kelch 5">
    <location>
        <begin position="291"/>
        <end position="341"/>
    </location>
</feature>
<feature type="repeat" description="Kelch 6">
    <location>
        <begin position="342"/>
        <end position="390"/>
    </location>
</feature>
<feature type="domain" description="IQ" evidence="1">
    <location>
        <begin position="430"/>
        <end position="459"/>
    </location>
</feature>
<feature type="repeat" description="Kelch 7">
    <location>
        <begin position="590"/>
        <end position="641"/>
    </location>
</feature>
<feature type="repeat" description="Kelch 8">
    <location>
        <begin position="642"/>
        <end position="695"/>
    </location>
</feature>
<feature type="repeat" description="Kelch 9">
    <location>
        <begin position="696"/>
        <end position="743"/>
    </location>
</feature>
<feature type="repeat" description="Kelch 10">
    <location>
        <begin position="745"/>
        <end position="795"/>
    </location>
</feature>
<feature type="repeat" description="Kelch 11">
    <location>
        <begin position="797"/>
        <end position="849"/>
    </location>
</feature>
<feature type="repeat" description="Kelch 12">
    <location>
        <begin position="851"/>
        <end position="898"/>
    </location>
</feature>
<feature type="region of interest" description="Disordered" evidence="2">
    <location>
        <begin position="398"/>
        <end position="427"/>
    </location>
</feature>
<keyword id="KW-0880">Kelch repeat</keyword>
<keyword id="KW-0677">Repeat</keyword>
<name>SCRA_LIMPO</name>
<sequence length="918" mass="103617">MARYRKPERVTRVISGSDEYVDFKKIDEEPTDKLDPNLGIIKSMPKLEPEEINDTLLRQTNLRSFKPGLSAVNDLDNESTPVVLAFGGINTARPDEYLNSSSVFVYHPDRNKWNFYTTMMEPRTYHAVGYFHRRVYVFGGYNPLHCRKGKMQATATTFQLTVQTKQWRKRADMRYARAHHNVTVMDERIFVFGGRDSNGEILAAVEMYEPEMDQWTTLASIPEPMMGSAIANNEGIIYVIGGVTTNKEKKPEGNLSNKIFCFDPLNNKWYRKPSLSSPRAFSAATTQNKKIWIWGGANLSEEGLLSSIDSIDVLDPKKGTLEHHMNFELAKHCHAVAKTGAHVFIVGGMSSVEASAIAETEMYDRKRNIIQRCSLLPVALTGIAVAAIPADTGGEYYEVPTSTPSSKAKPQPGSKPTSVKYKKQPDIHERNEAAKKVQRRWRRYIEQKSITKRMQQGDSSGSTMLEGNDRISGRIRTYISGYRPLPPDQDDLSKELVPVSIPFWPPDPDTTDSVFHTVRDQYRNPEEQMGFKHFYTIPRQMDPNLGMLLFMDEDYQHSKKVLGLRSVESVPYYINRFQASGTIQDNTIPVIIGTGGVDLRDPMNIAYGRSVFQYHPLKDRWEFFGYMPQPRNYHAAAYYRSAIYITGGYDPDVRTWGEMVATKTTFVYELASKNWTRMGDMRCARSHHSLLVFNDVLYAIGGRDDIGRLVSSVESYDHESNEWTMEKSMPSPRMGMAAVAHGGYIWLLGGLTSMTTEEPPVLDDVLCYDPVFKHWVDGRPLRIGRAFGNAAVCDNKIWLCGGAAPSTDENNYLVSVPAIDVYDEETMEWKQKTSLGCPRHSAIVVALESCLYIAGGVNSHELSATSRNELYMVDNDTIQTVRELPIPLTGMAAVTIPPKCVTFRSESLSIMIRHKVTP</sequence>
<reference key="1">
    <citation type="journal article" date="1995" name="J. Cell Biol.">
        <title>Sequence and domain organization of scruin, an actin-cross-linking protein in the acrosomal process of Limulus sperm.</title>
        <authorList>
            <person name="Way M."/>
            <person name="Sanders M."/>
            <person name="Garcia C."/>
            <person name="Sakai J."/>
            <person name="Matsudaira P."/>
        </authorList>
    </citation>
    <scope>NUCLEOTIDE SEQUENCE [MRNA]</scope>
    <source>
        <tissue>Testis</tissue>
    </source>
</reference>
<accession>Q25390</accession>
<dbReference type="EMBL" id="Z38132">
    <property type="protein sequence ID" value="CAA86292.1"/>
    <property type="molecule type" value="mRNA"/>
</dbReference>
<dbReference type="RefSeq" id="NP_001301080.1">
    <property type="nucleotide sequence ID" value="NM_001314151.1"/>
</dbReference>
<dbReference type="SMR" id="Q25390"/>
<dbReference type="EnsemblMetazoa" id="NM_001314151.1">
    <property type="protein sequence ID" value="NP_001301080.1"/>
    <property type="gene ID" value="LOC106468298"/>
</dbReference>
<dbReference type="GeneID" id="106468298"/>
<dbReference type="KEGG" id="lpol:106468298"/>
<dbReference type="OrthoDB" id="6350321at2759"/>
<dbReference type="Proteomes" id="UP000694941">
    <property type="component" value="Unplaced"/>
</dbReference>
<dbReference type="Gene3D" id="2.120.10.80">
    <property type="entry name" value="Kelch-type beta propeller"/>
    <property type="match status" value="4"/>
</dbReference>
<dbReference type="InterPro" id="IPR056737">
    <property type="entry name" value="Beta-prop_ATRN-MKLN-like"/>
</dbReference>
<dbReference type="InterPro" id="IPR015915">
    <property type="entry name" value="Kelch-typ_b-propeller"/>
</dbReference>
<dbReference type="InterPro" id="IPR006652">
    <property type="entry name" value="Kelch_1"/>
</dbReference>
<dbReference type="PANTHER" id="PTHR45632:SF3">
    <property type="entry name" value="KELCH-LIKE PROTEIN 32"/>
    <property type="match status" value="1"/>
</dbReference>
<dbReference type="PANTHER" id="PTHR45632">
    <property type="entry name" value="LD33804P"/>
    <property type="match status" value="1"/>
</dbReference>
<dbReference type="Pfam" id="PF24981">
    <property type="entry name" value="Beta-prop_ATRN-LZTR1"/>
    <property type="match status" value="1"/>
</dbReference>
<dbReference type="Pfam" id="PF24681">
    <property type="entry name" value="Kelch_KLHDC2_KLHL20_DRC7"/>
    <property type="match status" value="1"/>
</dbReference>
<dbReference type="PRINTS" id="PR00501">
    <property type="entry name" value="KELCHREPEAT"/>
</dbReference>
<dbReference type="SMART" id="SM00612">
    <property type="entry name" value="Kelch"/>
    <property type="match status" value="11"/>
</dbReference>
<dbReference type="SUPFAM" id="SSF117281">
    <property type="entry name" value="Kelch motif"/>
    <property type="match status" value="2"/>
</dbReference>
<dbReference type="PROSITE" id="PS50096">
    <property type="entry name" value="IQ"/>
    <property type="match status" value="1"/>
</dbReference>
<comment type="function">
    <text>Actin bundling protein found in the acrosomal sperm process.</text>
</comment>
<comment type="tissue specificity">
    <text>Sperm.</text>
</comment>
<protein>
    <recommendedName>
        <fullName>Alpha-scruin</fullName>
    </recommendedName>
</protein>
<organism>
    <name type="scientific">Limulus polyphemus</name>
    <name type="common">Atlantic horseshoe crab</name>
    <dbReference type="NCBI Taxonomy" id="6850"/>
    <lineage>
        <taxon>Eukaryota</taxon>
        <taxon>Metazoa</taxon>
        <taxon>Ecdysozoa</taxon>
        <taxon>Arthropoda</taxon>
        <taxon>Chelicerata</taxon>
        <taxon>Merostomata</taxon>
        <taxon>Xiphosura</taxon>
        <taxon>Limulidae</taxon>
        <taxon>Limulus</taxon>
    </lineage>
</organism>
<proteinExistence type="evidence at transcript level"/>